<gene>
    <name evidence="1" type="primary">scpA</name>
    <name type="ordered locus">BCA_4170</name>
</gene>
<dbReference type="EMBL" id="CP001407">
    <property type="protein sequence ID" value="ACO26027.1"/>
    <property type="molecule type" value="Genomic_DNA"/>
</dbReference>
<dbReference type="RefSeq" id="WP_001199758.1">
    <property type="nucleotide sequence ID" value="NZ_CP009318.1"/>
</dbReference>
<dbReference type="SMR" id="C1EQT2"/>
<dbReference type="GeneID" id="93007047"/>
<dbReference type="KEGG" id="bcx:BCA_4170"/>
<dbReference type="PATRIC" id="fig|572264.18.peg.4120"/>
<dbReference type="Proteomes" id="UP000002210">
    <property type="component" value="Chromosome"/>
</dbReference>
<dbReference type="GO" id="GO:0005737">
    <property type="term" value="C:cytoplasm"/>
    <property type="evidence" value="ECO:0007669"/>
    <property type="project" value="UniProtKB-SubCell"/>
</dbReference>
<dbReference type="GO" id="GO:0051301">
    <property type="term" value="P:cell division"/>
    <property type="evidence" value="ECO:0007669"/>
    <property type="project" value="UniProtKB-KW"/>
</dbReference>
<dbReference type="GO" id="GO:0007059">
    <property type="term" value="P:chromosome segregation"/>
    <property type="evidence" value="ECO:0007669"/>
    <property type="project" value="UniProtKB-UniRule"/>
</dbReference>
<dbReference type="GO" id="GO:0006260">
    <property type="term" value="P:DNA replication"/>
    <property type="evidence" value="ECO:0007669"/>
    <property type="project" value="UniProtKB-UniRule"/>
</dbReference>
<dbReference type="Gene3D" id="6.10.250.2410">
    <property type="match status" value="1"/>
</dbReference>
<dbReference type="Gene3D" id="1.10.10.580">
    <property type="entry name" value="Structural maintenance of chromosome 1. Chain E"/>
    <property type="match status" value="1"/>
</dbReference>
<dbReference type="HAMAP" id="MF_01805">
    <property type="entry name" value="ScpA"/>
    <property type="match status" value="1"/>
</dbReference>
<dbReference type="InterPro" id="IPR003768">
    <property type="entry name" value="ScpA"/>
</dbReference>
<dbReference type="InterPro" id="IPR023093">
    <property type="entry name" value="ScpA-like_C"/>
</dbReference>
<dbReference type="NCBIfam" id="NF000992">
    <property type="entry name" value="PRK00104.1-1"/>
    <property type="match status" value="1"/>
</dbReference>
<dbReference type="NCBIfam" id="NF000995">
    <property type="entry name" value="PRK00104.1-4"/>
    <property type="match status" value="1"/>
</dbReference>
<dbReference type="PANTHER" id="PTHR33969">
    <property type="entry name" value="SEGREGATION AND CONDENSATION PROTEIN A"/>
    <property type="match status" value="1"/>
</dbReference>
<dbReference type="PANTHER" id="PTHR33969:SF2">
    <property type="entry name" value="SEGREGATION AND CONDENSATION PROTEIN A"/>
    <property type="match status" value="1"/>
</dbReference>
<dbReference type="Pfam" id="PF02616">
    <property type="entry name" value="SMC_ScpA"/>
    <property type="match status" value="1"/>
</dbReference>
<protein>
    <recommendedName>
        <fullName evidence="1">Segregation and condensation protein A</fullName>
    </recommendedName>
</protein>
<proteinExistence type="inferred from homology"/>
<reference key="1">
    <citation type="submission" date="2009-02" db="EMBL/GenBank/DDBJ databases">
        <title>Genome sequence of Bacillus cereus 03BB102.</title>
        <authorList>
            <person name="Dodson R.J."/>
            <person name="Jackson P."/>
            <person name="Munk A.C."/>
            <person name="Brettin T."/>
            <person name="Bruce D."/>
            <person name="Detter C."/>
            <person name="Tapia R."/>
            <person name="Han C."/>
            <person name="Sutton G."/>
            <person name="Sims D."/>
        </authorList>
    </citation>
    <scope>NUCLEOTIDE SEQUENCE [LARGE SCALE GENOMIC DNA]</scope>
    <source>
        <strain>03BB102</strain>
    </source>
</reference>
<keyword id="KW-0131">Cell cycle</keyword>
<keyword id="KW-0132">Cell division</keyword>
<keyword id="KW-0159">Chromosome partition</keyword>
<keyword id="KW-0963">Cytoplasm</keyword>
<organism>
    <name type="scientific">Bacillus cereus (strain 03BB102)</name>
    <dbReference type="NCBI Taxonomy" id="572264"/>
    <lineage>
        <taxon>Bacteria</taxon>
        <taxon>Bacillati</taxon>
        <taxon>Bacillota</taxon>
        <taxon>Bacilli</taxon>
        <taxon>Bacillales</taxon>
        <taxon>Bacillaceae</taxon>
        <taxon>Bacillus</taxon>
        <taxon>Bacillus cereus group</taxon>
    </lineage>
</organism>
<evidence type="ECO:0000255" key="1">
    <source>
        <dbReference type="HAMAP-Rule" id="MF_01805"/>
    </source>
</evidence>
<comment type="function">
    <text evidence="1">Participates in chromosomal partition during cell division. May act via the formation of a condensin-like complex containing Smc and ScpB that pull DNA away from mid-cell into both cell halves.</text>
</comment>
<comment type="subunit">
    <text evidence="1">Component of a cohesin-like complex composed of ScpA, ScpB and the Smc homodimer, in which ScpA and ScpB bind to the head domain of Smc. The presence of the three proteins is required for the association of the complex with DNA.</text>
</comment>
<comment type="subcellular location">
    <subcellularLocation>
        <location evidence="1">Cytoplasm</location>
    </subcellularLocation>
    <text evidence="1">Associated with two foci at the outer edges of the nucleoid region in young cells, and at four foci within both cell halves in older cells.</text>
</comment>
<comment type="similarity">
    <text evidence="1">Belongs to the ScpA family.</text>
</comment>
<accession>C1EQT2</accession>
<name>SCPA_BACC3</name>
<sequence length="247" mass="29346">MQYNFKVEAFEGPLDLLLHLIHRYEIDIYNIPVAEITEQYLSYVHTMKELQLDVASEYLVMAATLLQIKSKMLLPKHEEDVLDNGDDFIDDPRQELMERLIEYKKYKQVATELKEREQERAQLYTRPPIDFTSLQQEEETNLPLDVTLYDMLAAFQKLMRRKKAKKPVTTRITRQEIPIEQRMTDILKQLEIQGGRQSFYDLFVDDEREIMVVTFLAVLELMKNQQIIIEQEHNFDEIFVSSYTKSA</sequence>
<feature type="chain" id="PRO_1000187552" description="Segregation and condensation protein A">
    <location>
        <begin position="1"/>
        <end position="247"/>
    </location>
</feature>